<gene>
    <name type="primary">Dynlt1</name>
    <name type="synonym">Tctel1</name>
    <name type="synonym">Tctex-1</name>
    <name type="synonym">Tctex1</name>
</gene>
<dbReference type="EMBL" id="AB010119">
    <property type="protein sequence ID" value="BAA34532.1"/>
    <property type="molecule type" value="mRNA"/>
</dbReference>
<dbReference type="EMBL" id="AJ131437">
    <property type="protein sequence ID" value="CAC18728.1"/>
    <property type="molecule type" value="mRNA"/>
</dbReference>
<dbReference type="RefSeq" id="NP_112608.1">
    <property type="nucleotide sequence ID" value="NM_031318.1"/>
</dbReference>
<dbReference type="SMR" id="Q9Z336"/>
<dbReference type="BioGRID" id="249705">
    <property type="interactions" value="1"/>
</dbReference>
<dbReference type="CORUM" id="Q9Z336"/>
<dbReference type="FunCoup" id="Q9Z336">
    <property type="interactions" value="1655"/>
</dbReference>
<dbReference type="IntAct" id="Q9Z336">
    <property type="interactions" value="2"/>
</dbReference>
<dbReference type="STRING" id="10116.ENSRNOP00000024656"/>
<dbReference type="iPTMnet" id="Q9Z336"/>
<dbReference type="PhosphoSitePlus" id="Q9Z336"/>
<dbReference type="jPOST" id="Q9Z336"/>
<dbReference type="PaxDb" id="10116-ENSRNOP00000024656"/>
<dbReference type="GeneID" id="83462"/>
<dbReference type="KEGG" id="rno:83462"/>
<dbReference type="AGR" id="RGD:620261"/>
<dbReference type="CTD" id="6993"/>
<dbReference type="RGD" id="620261">
    <property type="gene designation" value="Dynlt1"/>
</dbReference>
<dbReference type="VEuPathDB" id="HostDB:ENSRNOG00000018207"/>
<dbReference type="eggNOG" id="KOG4081">
    <property type="taxonomic scope" value="Eukaryota"/>
</dbReference>
<dbReference type="HOGENOM" id="CLU_097204_7_2_1"/>
<dbReference type="InParanoid" id="Q9Z336"/>
<dbReference type="PhylomeDB" id="Q9Z336"/>
<dbReference type="TreeFam" id="TF313904"/>
<dbReference type="Reactome" id="R-RNO-6798695">
    <property type="pathway name" value="Neutrophil degranulation"/>
</dbReference>
<dbReference type="PRO" id="PR:Q9Z336"/>
<dbReference type="Proteomes" id="UP000002494">
    <property type="component" value="Chromosome 1"/>
</dbReference>
<dbReference type="Bgee" id="ENSRNOG00000018207">
    <property type="expression patterns" value="Expressed in ovary and 20 other cell types or tissues"/>
</dbReference>
<dbReference type="ExpressionAtlas" id="Q9Z336">
    <property type="expression patterns" value="baseline and differential"/>
</dbReference>
<dbReference type="GO" id="GO:0044295">
    <property type="term" value="C:axonal growth cone"/>
    <property type="evidence" value="ECO:0000314"/>
    <property type="project" value="RGD"/>
</dbReference>
<dbReference type="GO" id="GO:0005737">
    <property type="term" value="C:cytoplasm"/>
    <property type="evidence" value="ECO:0000318"/>
    <property type="project" value="GO_Central"/>
</dbReference>
<dbReference type="GO" id="GO:0005868">
    <property type="term" value="C:cytoplasmic dynein complex"/>
    <property type="evidence" value="ECO:0000250"/>
    <property type="project" value="UniProtKB"/>
</dbReference>
<dbReference type="GO" id="GO:0005881">
    <property type="term" value="C:cytoplasmic microtubule"/>
    <property type="evidence" value="ECO:0000266"/>
    <property type="project" value="RGD"/>
</dbReference>
<dbReference type="GO" id="GO:0030286">
    <property type="term" value="C:dynein complex"/>
    <property type="evidence" value="ECO:0000266"/>
    <property type="project" value="RGD"/>
</dbReference>
<dbReference type="GO" id="GO:0005794">
    <property type="term" value="C:Golgi apparatus"/>
    <property type="evidence" value="ECO:0000266"/>
    <property type="project" value="RGD"/>
</dbReference>
<dbReference type="GO" id="GO:0030426">
    <property type="term" value="C:growth cone"/>
    <property type="evidence" value="ECO:0000266"/>
    <property type="project" value="RGD"/>
</dbReference>
<dbReference type="GO" id="GO:0043657">
    <property type="term" value="C:host cell"/>
    <property type="evidence" value="ECO:0007669"/>
    <property type="project" value="GOC"/>
</dbReference>
<dbReference type="GO" id="GO:0030027">
    <property type="term" value="C:lamellipodium"/>
    <property type="evidence" value="ECO:0000314"/>
    <property type="project" value="RGD"/>
</dbReference>
<dbReference type="GO" id="GO:0005739">
    <property type="term" value="C:mitochondrion"/>
    <property type="evidence" value="ECO:0007669"/>
    <property type="project" value="GOC"/>
</dbReference>
<dbReference type="GO" id="GO:0043025">
    <property type="term" value="C:neuronal cell body"/>
    <property type="evidence" value="ECO:0000314"/>
    <property type="project" value="RGD"/>
</dbReference>
<dbReference type="GO" id="GO:0001917">
    <property type="term" value="C:photoreceptor inner segment"/>
    <property type="evidence" value="ECO:0000266"/>
    <property type="project" value="RGD"/>
</dbReference>
<dbReference type="GO" id="GO:0099503">
    <property type="term" value="C:secretory vesicle"/>
    <property type="evidence" value="ECO:0000266"/>
    <property type="project" value="RGD"/>
</dbReference>
<dbReference type="GO" id="GO:0005819">
    <property type="term" value="C:spindle"/>
    <property type="evidence" value="ECO:0007669"/>
    <property type="project" value="UniProtKB-SubCell"/>
</dbReference>
<dbReference type="GO" id="GO:0045505">
    <property type="term" value="F:dynein intermediate chain binding"/>
    <property type="evidence" value="ECO:0000318"/>
    <property type="project" value="GO_Central"/>
</dbReference>
<dbReference type="GO" id="GO:0031681">
    <property type="term" value="F:G-protein beta-subunit binding"/>
    <property type="evidence" value="ECO:0000266"/>
    <property type="project" value="RGD"/>
</dbReference>
<dbReference type="GO" id="GO:0030742">
    <property type="term" value="F:GTP-dependent protein binding"/>
    <property type="evidence" value="ECO:0000266"/>
    <property type="project" value="RGD"/>
</dbReference>
<dbReference type="GO" id="GO:0042802">
    <property type="term" value="F:identical protein binding"/>
    <property type="evidence" value="ECO:0000266"/>
    <property type="project" value="RGD"/>
</dbReference>
<dbReference type="GO" id="GO:0044325">
    <property type="term" value="F:transmembrane transporter binding"/>
    <property type="evidence" value="ECO:0000353"/>
    <property type="project" value="RGD"/>
</dbReference>
<dbReference type="GO" id="GO:0061564">
    <property type="term" value="P:axon development"/>
    <property type="evidence" value="ECO:0000314"/>
    <property type="project" value="RGD"/>
</dbReference>
<dbReference type="GO" id="GO:0010659">
    <property type="term" value="P:cardiac muscle cell apoptotic process"/>
    <property type="evidence" value="ECO:0000315"/>
    <property type="project" value="RGD"/>
</dbReference>
<dbReference type="GO" id="GO:0051301">
    <property type="term" value="P:cell division"/>
    <property type="evidence" value="ECO:0007669"/>
    <property type="project" value="UniProtKB-KW"/>
</dbReference>
<dbReference type="GO" id="GO:0016358">
    <property type="term" value="P:dendrite development"/>
    <property type="evidence" value="ECO:0000314"/>
    <property type="project" value="RGD"/>
</dbReference>
<dbReference type="GO" id="GO:0000132">
    <property type="term" value="P:establishment of mitotic spindle orientation"/>
    <property type="evidence" value="ECO:0000250"/>
    <property type="project" value="UniProtKB"/>
</dbReference>
<dbReference type="GO" id="GO:0006886">
    <property type="term" value="P:intracellular protein transport"/>
    <property type="evidence" value="ECO:0000304"/>
    <property type="project" value="UniProtKB"/>
</dbReference>
<dbReference type="GO" id="GO:0019060">
    <property type="term" value="P:intracellular transport of viral protein in host cell"/>
    <property type="evidence" value="ECO:0000266"/>
    <property type="project" value="RGD"/>
</dbReference>
<dbReference type="GO" id="GO:0007018">
    <property type="term" value="P:microtubule-based movement"/>
    <property type="evidence" value="ECO:0000318"/>
    <property type="project" value="GO_Central"/>
</dbReference>
<dbReference type="GO" id="GO:0070373">
    <property type="term" value="P:negative regulation of ERK1 and ERK2 cascade"/>
    <property type="evidence" value="ECO:0000266"/>
    <property type="project" value="RGD"/>
</dbReference>
<dbReference type="GO" id="GO:0035795">
    <property type="term" value="P:negative regulation of mitochondrial membrane permeability"/>
    <property type="evidence" value="ECO:0000315"/>
    <property type="project" value="RGD"/>
</dbReference>
<dbReference type="GO" id="GO:0050768">
    <property type="term" value="P:negative regulation of neurogenesis"/>
    <property type="evidence" value="ECO:0000250"/>
    <property type="project" value="UniProtKB"/>
</dbReference>
<dbReference type="GO" id="GO:0048812">
    <property type="term" value="P:neuron projection morphogenesis"/>
    <property type="evidence" value="ECO:0000315"/>
    <property type="project" value="UniProtKB"/>
</dbReference>
<dbReference type="GO" id="GO:0010976">
    <property type="term" value="P:positive regulation of neuron projection development"/>
    <property type="evidence" value="ECO:0000315"/>
    <property type="project" value="RGD"/>
</dbReference>
<dbReference type="GO" id="GO:0035022">
    <property type="term" value="P:positive regulation of Rac protein signal transduction"/>
    <property type="evidence" value="ECO:0000315"/>
    <property type="project" value="RGD"/>
</dbReference>
<dbReference type="GO" id="GO:0051493">
    <property type="term" value="P:regulation of cytoskeleton organization"/>
    <property type="evidence" value="ECO:0000314"/>
    <property type="project" value="UniProtKB"/>
</dbReference>
<dbReference type="GO" id="GO:0008277">
    <property type="term" value="P:regulation of G protein-coupled receptor signaling pathway"/>
    <property type="evidence" value="ECO:0000250"/>
    <property type="project" value="UniProtKB"/>
</dbReference>
<dbReference type="GO" id="GO:0043087">
    <property type="term" value="P:regulation of GTPase activity"/>
    <property type="evidence" value="ECO:0000315"/>
    <property type="project" value="UniProtKB"/>
</dbReference>
<dbReference type="CDD" id="cd21462">
    <property type="entry name" value="DLC-like_DYNLT1"/>
    <property type="match status" value="1"/>
</dbReference>
<dbReference type="FunFam" id="3.30.1140.40:FF:000001">
    <property type="entry name" value="Dynein light chain Tctex-type 1"/>
    <property type="match status" value="1"/>
</dbReference>
<dbReference type="Gene3D" id="3.30.1140.40">
    <property type="entry name" value="Tctex-1"/>
    <property type="match status" value="1"/>
</dbReference>
<dbReference type="InterPro" id="IPR005334">
    <property type="entry name" value="Tctex-1-like"/>
</dbReference>
<dbReference type="InterPro" id="IPR038586">
    <property type="entry name" value="Tctex-1-like_sf"/>
</dbReference>
<dbReference type="PANTHER" id="PTHR21255:SF19">
    <property type="entry name" value="DYNEIN LIGHT CHAIN TCTEX-TYPE 1"/>
    <property type="match status" value="1"/>
</dbReference>
<dbReference type="PANTHER" id="PTHR21255">
    <property type="entry name" value="T-COMPLEX-ASSOCIATED-TESTIS-EXPRESSED 1/ DYNEIN LIGHT CHAIN"/>
    <property type="match status" value="1"/>
</dbReference>
<dbReference type="Pfam" id="PF03645">
    <property type="entry name" value="Tctex-1"/>
    <property type="match status" value="1"/>
</dbReference>
<reference key="1">
    <citation type="journal article" date="1998" name="J. Biol. Chem.">
        <title>Interaction of Doc2 with tctex-1, a light chain of cytoplasmic dynein. Implication in dynein-dependent vesicle transport.</title>
        <authorList>
            <person name="Nagano F."/>
            <person name="Orita S."/>
            <person name="Sasaki T."/>
            <person name="Naito A."/>
            <person name="Sakaguchi G."/>
            <person name="Maeda M."/>
            <person name="Watanabe T."/>
            <person name="Kominami E."/>
            <person name="Uchiyama Y."/>
            <person name="Takai Y."/>
        </authorList>
    </citation>
    <scope>NUCLEOTIDE SEQUENCE [MRNA]</scope>
    <scope>INTERACTION WITH DOC2A AND DOC2B</scope>
    <source>
        <strain>Sprague-Dawley</strain>
        <tissue>Brain</tissue>
    </source>
</reference>
<reference key="2">
    <citation type="submission" date="1998-12" db="EMBL/GenBank/DDBJ databases">
        <authorList>
            <person name="Horiuchi M."/>
            <person name="Betz H."/>
        </authorList>
    </citation>
    <scope>NUCLEOTIDE SEQUENCE [MRNA]</scope>
</reference>
<reference key="3">
    <citation type="journal article" date="2001" name="Cell Motil. Cytoskeleton">
        <title>Light chains of mammalian cytoplasmic dynein: identification and characterization of a family of LC8 light chains.</title>
        <authorList>
            <person name="Wilson M.J."/>
            <person name="Salata M.W."/>
            <person name="Susalka S.J."/>
            <person name="Pfister K.K."/>
        </authorList>
    </citation>
    <scope>IDENTIFICATION IN THE CYTOPLASMIC DYNEIN 1 COMPLEX</scope>
</reference>
<reference key="4">
    <citation type="journal article" date="2003" name="Brain Res. Mol. Brain Res.">
        <title>Sensory neuron proteins interact with the intracellular domains of sodium channel NaV1.8.</title>
        <authorList>
            <person name="Malik-Hall M."/>
            <person name="Poon W.-Y.L."/>
            <person name="Baker M.D."/>
            <person name="Wood J.N."/>
            <person name="Okuse K."/>
        </authorList>
    </citation>
    <scope>INTERACTION WITH SCN10A</scope>
    <scope>IDENTIFICATION IN A COMPLEX WITH SCN10A</scope>
</reference>
<reference key="5">
    <citation type="journal article" date="2005" name="Dev. Cell">
        <title>The dynein light chain Tctex-1 has a dynein-independent role in actin remodeling during neurite outgrowth.</title>
        <authorList>
            <person name="Chuang J.Z."/>
            <person name="Yeh T.Y."/>
            <person name="Bollati F."/>
            <person name="Conde C."/>
            <person name="Canavosio F."/>
            <person name="Caceres A."/>
            <person name="Sung C.H."/>
        </authorList>
    </citation>
    <scope>FUNCTION IN REGULATION OF NEURONAL MORPHOGENESIS</scope>
    <scope>MUTAGENESIS OF THR-94</scope>
</reference>
<reference key="6">
    <citation type="journal article" date="2007" name="EMBO J.">
        <title>G protein beta gamma subunit interaction with the dynein light-chain component Tctex-1 regulates neurite outgrowth.</title>
        <authorList>
            <person name="Sachdev P."/>
            <person name="Menon S."/>
            <person name="Kastner D.B."/>
            <person name="Chuang J.Z."/>
            <person name="Yeh T.Y."/>
            <person name="Conde C."/>
            <person name="Caceres A."/>
            <person name="Sung C.H."/>
            <person name="Sakmar T.P."/>
        </authorList>
    </citation>
    <scope>INTERACTION WITH GNB1; GNB2; GNB3 AND GNB5</scope>
    <scope>FUNCTION IN NEURONAL MORPHOGENESIS</scope>
</reference>
<evidence type="ECO:0000250" key="1"/>
<evidence type="ECO:0000250" key="2">
    <source>
        <dbReference type="UniProtKB" id="P51807"/>
    </source>
</evidence>
<evidence type="ECO:0000250" key="3">
    <source>
        <dbReference type="UniProtKB" id="P63172"/>
    </source>
</evidence>
<evidence type="ECO:0000269" key="4">
    <source>
    </source>
</evidence>
<evidence type="ECO:0000269" key="5">
    <source>
    </source>
</evidence>
<evidence type="ECO:0000269" key="6">
    <source>
    </source>
</evidence>
<evidence type="ECO:0000269" key="7">
    <source>
    </source>
</evidence>
<evidence type="ECO:0000269" key="8">
    <source>
    </source>
</evidence>
<evidence type="ECO:0000305" key="9"/>
<comment type="function">
    <text evidence="1">Acts as one of several non-catalytic accessory components of the cytoplasmic dynein 1 complex that are thought to be involved in linking dynein to cargos and to adapter proteins that regulate dynein function. Cytoplasmic dynein 1 acts as a motor for the intracellular retrograde motility of vesicles and organelles along microtubules. Binds to transport cargos and is involved in apical cargo transport such as rhodopsin-bearing vesicles in polarized epithelia. Is involved in intracellular targeting of D-type retrovirus gag polyproteins to the cytoplasmic assembly site. May also be a accessory component of axonemal dynein (By similarity).</text>
</comment>
<comment type="function">
    <text evidence="3 6 7">Plays a role in neuronal morphogenesis; the function is independent of cytoplasmic dynein and seems to be coupled to regulation of the actin cytoskeleton by enhancing Rac1 activity. Required for neurite outgrowth. The function in neurogenesis may be regulated by association with a G-protein beta-gamma dimer. May function as a receptor-independent activator of heterotrimeric G-protein signaling; the activation appears to be independent of a nucleotide exchange. Plays a role in regulating neurogenesis; inhibits the genesis of neurons from precursor cells during cortical development presumably by antagonizing ARHGEF2. Unrelated to the role in retrograde microtubule-associated movement may play a role in the dimerization of cytoplasmic proteins/domains such as for ACVR2B. Binds to the cytoplasmic domain of ACVR2B and, in vitro, inhibits ACVR2B signaling (By similarity). Involved in the regulation of mitotic spindle orientation.</text>
</comment>
<comment type="subunit">
    <text evidence="1 2 3 4 5 7 8">Homodimer (By similarity). The cytoplasmic dynein 1 complex consists of two catalytic heavy chains (HCs) and a number of non-catalytic subunits presented by intermediate chains (ICs), light intermediate chains (LICs) and light chains (LCs); the composition seems to vary in respect to the IC, LIC and LC composition. The heavy chain homodimer serves as a scaffold for the probable homodimeric assembly of the respective non-catalytic subunits. The ICs and LICs bind directly to the HC dimer and dynein LCs assemble on the IC dimer. DYNLT1 and DYNLT3 compete for association with dynein IC (DYNC1I1 or DYNC1I2). Self-associates. Interacts with RHO. Interacts with DYNC1I1 and DYNC1I2 (By similarity). Interacts with DOC2A, DOC2B and SCN10A. Interacts with PVR. Interacts with SVIL isoform 2 (By similarity). Interacts with GNB1; the interaction occurs in presence of guanine nucleotide-binding protein G(T) subunit gamma; the interaction diminishes the association of DYNLT1 with dynein IC (DYNC1I1 or DYNC1I2). Interacts with GNB2, GNB3 and GNB5; the interactions occur in presence of guanine nucleotide-binding protein G(T) subunit gamma. Interacts with ACVR2B and ARHGEF2 (By similarity). Interacts with DNAI4 (By similarity). Interacts with CFAP61 (By similarity).</text>
</comment>
<comment type="interaction">
    <interactant intactId="EBI-920359">
        <id>Q9Z336</id>
    </interactant>
    <interactant intactId="EBI-1800320">
        <id>Q62968</id>
        <label>Scn10a</label>
    </interactant>
    <organismsDiffer>false</organismsDiffer>
    <experiments>2</experiments>
</comment>
<comment type="subcellular location">
    <subcellularLocation>
        <location evidence="1">Golgi apparatus</location>
    </subcellularLocation>
    <subcellularLocation>
        <location evidence="1">Cytoplasm</location>
    </subcellularLocation>
    <subcellularLocation>
        <location evidence="1">Cytoplasm</location>
        <location evidence="1">Cytoskeleton</location>
        <location evidence="1">Spindle</location>
    </subcellularLocation>
    <text evidence="1">Localizes to mitotic spindles.</text>
</comment>
<comment type="PTM">
    <text>Phosphorylated by BMPR2. The phosphorylation status is proposed to regulate the association with the cytoplasmic dynein complex and may have role in cytoplasmic dynein cargo release.</text>
</comment>
<comment type="similarity">
    <text evidence="9">Belongs to the dynein light chain Tctex-type family.</text>
</comment>
<protein>
    <recommendedName>
        <fullName>Dynein light chain Tctex-type 1</fullName>
    </recommendedName>
    <alternativeName>
        <fullName>Activator of G-protein signaling 2</fullName>
        <shortName>AGS2</shortName>
    </alternativeName>
    <alternativeName>
        <fullName>T-complex testis-specific protein 1 homolog</fullName>
    </alternativeName>
</protein>
<feature type="chain" id="PRO_0000195154" description="Dynein light chain Tctex-type 1">
    <location>
        <begin position="1"/>
        <end position="113"/>
    </location>
</feature>
<feature type="region of interest" description="Interaction with GNB1" evidence="7">
    <location>
        <begin position="41"/>
        <end position="113"/>
    </location>
</feature>
<feature type="modified residue" description="N-acetylmethionine" evidence="3">
    <location>
        <position position="1"/>
    </location>
</feature>
<feature type="mutagenesis site" description="No effect on interaction with dynein intermediate chain (DYNC1I1 or DYNC1I2)." evidence="6">
    <original>T</original>
    <variation>A</variation>
    <location>
        <position position="94"/>
    </location>
</feature>
<feature type="mutagenesis site" description="Impairs interaction with dynein intermediate chain (DYNC1I1 or DYNC1I2)." evidence="6">
    <original>T</original>
    <variation>E</variation>
    <location>
        <position position="94"/>
    </location>
</feature>
<proteinExistence type="evidence at protein level"/>
<name>DYLT1_RAT</name>
<accession>Q9Z336</accession>
<keyword id="KW-0007">Acetylation</keyword>
<keyword id="KW-0131">Cell cycle</keyword>
<keyword id="KW-0132">Cell division</keyword>
<keyword id="KW-0963">Cytoplasm</keyword>
<keyword id="KW-0206">Cytoskeleton</keyword>
<keyword id="KW-0243">Dynein</keyword>
<keyword id="KW-0333">Golgi apparatus</keyword>
<keyword id="KW-0493">Microtubule</keyword>
<keyword id="KW-0498">Mitosis</keyword>
<keyword id="KW-0505">Motor protein</keyword>
<keyword id="KW-0524">Neurogenesis</keyword>
<keyword id="KW-0597">Phosphoprotein</keyword>
<keyword id="KW-1185">Reference proteome</keyword>
<keyword id="KW-0813">Transport</keyword>
<sequence>MEDFQASEETAFVVDEVSNIVKEAIESAIGGNAYQHSKVNQWTTNVVEQTLSQLTKLGKPFKYIVTCVIMQKNGAGLHTASSCFWDSSTDGSCTVRWENKTMYCIVSAFGLSI</sequence>
<organism>
    <name type="scientific">Rattus norvegicus</name>
    <name type="common">Rat</name>
    <dbReference type="NCBI Taxonomy" id="10116"/>
    <lineage>
        <taxon>Eukaryota</taxon>
        <taxon>Metazoa</taxon>
        <taxon>Chordata</taxon>
        <taxon>Craniata</taxon>
        <taxon>Vertebrata</taxon>
        <taxon>Euteleostomi</taxon>
        <taxon>Mammalia</taxon>
        <taxon>Eutheria</taxon>
        <taxon>Euarchontoglires</taxon>
        <taxon>Glires</taxon>
        <taxon>Rodentia</taxon>
        <taxon>Myomorpha</taxon>
        <taxon>Muroidea</taxon>
        <taxon>Muridae</taxon>
        <taxon>Murinae</taxon>
        <taxon>Rattus</taxon>
    </lineage>
</organism>